<gene>
    <name evidence="1" type="primary">cmoB</name>
    <name type="ordered locus">ECH74115_2607</name>
</gene>
<protein>
    <recommendedName>
        <fullName evidence="1">tRNA U34 carboxymethyltransferase</fullName>
        <ecNumber evidence="1">2.5.1.-</ecNumber>
    </recommendedName>
</protein>
<dbReference type="EC" id="2.5.1.-" evidence="1"/>
<dbReference type="EMBL" id="CP001164">
    <property type="protein sequence ID" value="ACI38294.1"/>
    <property type="molecule type" value="Genomic_DNA"/>
</dbReference>
<dbReference type="RefSeq" id="WP_000564730.1">
    <property type="nucleotide sequence ID" value="NC_011353.1"/>
</dbReference>
<dbReference type="SMR" id="B5YR16"/>
<dbReference type="KEGG" id="ecf:ECH74115_2607"/>
<dbReference type="HOGENOM" id="CLU_052665_0_0_6"/>
<dbReference type="GO" id="GO:0016765">
    <property type="term" value="F:transferase activity, transferring alkyl or aryl (other than methyl) groups"/>
    <property type="evidence" value="ECO:0007669"/>
    <property type="project" value="UniProtKB-UniRule"/>
</dbReference>
<dbReference type="GO" id="GO:0002098">
    <property type="term" value="P:tRNA wobble uridine modification"/>
    <property type="evidence" value="ECO:0007669"/>
    <property type="project" value="InterPro"/>
</dbReference>
<dbReference type="CDD" id="cd02440">
    <property type="entry name" value="AdoMet_MTases"/>
    <property type="match status" value="1"/>
</dbReference>
<dbReference type="FunFam" id="3.40.50.150:FF:000080">
    <property type="entry name" value="tRNA U34 carboxymethyltransferase"/>
    <property type="match status" value="1"/>
</dbReference>
<dbReference type="Gene3D" id="3.40.50.150">
    <property type="entry name" value="Vaccinia Virus protein VP39"/>
    <property type="match status" value="1"/>
</dbReference>
<dbReference type="HAMAP" id="MF_01590">
    <property type="entry name" value="tRNA_carboxymethyltr_CmoB"/>
    <property type="match status" value="1"/>
</dbReference>
<dbReference type="InterPro" id="IPR010017">
    <property type="entry name" value="CmoB"/>
</dbReference>
<dbReference type="InterPro" id="IPR027555">
    <property type="entry name" value="Mo5U34_MeTrfas-like"/>
</dbReference>
<dbReference type="InterPro" id="IPR029063">
    <property type="entry name" value="SAM-dependent_MTases_sf"/>
</dbReference>
<dbReference type="NCBIfam" id="NF011650">
    <property type="entry name" value="PRK15068.1"/>
    <property type="match status" value="1"/>
</dbReference>
<dbReference type="NCBIfam" id="TIGR00452">
    <property type="entry name" value="tRNA 5-methoxyuridine(34)/uridine 5-oxyacetic acid(34) synthase CmoB"/>
    <property type="match status" value="1"/>
</dbReference>
<dbReference type="PANTHER" id="PTHR43861">
    <property type="entry name" value="TRANS-ACONITATE 2-METHYLTRANSFERASE-RELATED"/>
    <property type="match status" value="1"/>
</dbReference>
<dbReference type="Pfam" id="PF08003">
    <property type="entry name" value="Methyltransf_9"/>
    <property type="match status" value="1"/>
</dbReference>
<dbReference type="SUPFAM" id="SSF53335">
    <property type="entry name" value="S-adenosyl-L-methionine-dependent methyltransferases"/>
    <property type="match status" value="1"/>
</dbReference>
<keyword id="KW-0808">Transferase</keyword>
<keyword id="KW-0819">tRNA processing</keyword>
<feature type="chain" id="PRO_1000201292" description="tRNA U34 carboxymethyltransferase">
    <location>
        <begin position="1"/>
        <end position="323"/>
    </location>
</feature>
<feature type="binding site" evidence="1">
    <location>
        <position position="91"/>
    </location>
    <ligand>
        <name>carboxy-S-adenosyl-L-methionine</name>
        <dbReference type="ChEBI" id="CHEBI:134278"/>
    </ligand>
</feature>
<feature type="binding site" evidence="1">
    <location>
        <position position="105"/>
    </location>
    <ligand>
        <name>carboxy-S-adenosyl-L-methionine</name>
        <dbReference type="ChEBI" id="CHEBI:134278"/>
    </ligand>
</feature>
<feature type="binding site" evidence="1">
    <location>
        <position position="110"/>
    </location>
    <ligand>
        <name>carboxy-S-adenosyl-L-methionine</name>
        <dbReference type="ChEBI" id="CHEBI:134278"/>
    </ligand>
</feature>
<feature type="binding site" evidence="1">
    <location>
        <position position="130"/>
    </location>
    <ligand>
        <name>carboxy-S-adenosyl-L-methionine</name>
        <dbReference type="ChEBI" id="CHEBI:134278"/>
    </ligand>
</feature>
<feature type="binding site" evidence="1">
    <location>
        <begin position="152"/>
        <end position="154"/>
    </location>
    <ligand>
        <name>carboxy-S-adenosyl-L-methionine</name>
        <dbReference type="ChEBI" id="CHEBI:134278"/>
    </ligand>
</feature>
<feature type="binding site" evidence="1">
    <location>
        <begin position="181"/>
        <end position="182"/>
    </location>
    <ligand>
        <name>carboxy-S-adenosyl-L-methionine</name>
        <dbReference type="ChEBI" id="CHEBI:134278"/>
    </ligand>
</feature>
<feature type="binding site" evidence="1">
    <location>
        <position position="196"/>
    </location>
    <ligand>
        <name>carboxy-S-adenosyl-L-methionine</name>
        <dbReference type="ChEBI" id="CHEBI:134278"/>
    </ligand>
</feature>
<feature type="binding site" evidence="1">
    <location>
        <position position="200"/>
    </location>
    <ligand>
        <name>carboxy-S-adenosyl-L-methionine</name>
        <dbReference type="ChEBI" id="CHEBI:134278"/>
    </ligand>
</feature>
<feature type="binding site" evidence="1">
    <location>
        <position position="315"/>
    </location>
    <ligand>
        <name>carboxy-S-adenosyl-L-methionine</name>
        <dbReference type="ChEBI" id="CHEBI:134278"/>
    </ligand>
</feature>
<reference key="1">
    <citation type="journal article" date="2011" name="Proc. Natl. Acad. Sci. U.S.A.">
        <title>Genomic anatomy of Escherichia coli O157:H7 outbreaks.</title>
        <authorList>
            <person name="Eppinger M."/>
            <person name="Mammel M.K."/>
            <person name="Leclerc J.E."/>
            <person name="Ravel J."/>
            <person name="Cebula T.A."/>
        </authorList>
    </citation>
    <scope>NUCLEOTIDE SEQUENCE [LARGE SCALE GENOMIC DNA]</scope>
    <source>
        <strain>EC4115 / EHEC</strain>
    </source>
</reference>
<accession>B5YR16</accession>
<evidence type="ECO:0000255" key="1">
    <source>
        <dbReference type="HAMAP-Rule" id="MF_01590"/>
    </source>
</evidence>
<proteinExistence type="inferred from homology"/>
<sequence>MIDFGNFYSLIAKNHLSHWLETLPAQIANWQREQQHGLFKQWSNAVEFLPEIKPYRLDLLHSVTAESEEPLSAGQIKRIETLMRNLMPWRKGPFSLYGVNIDTEWRSDWKWDRVLPHLSDLTGRTILDVGCGSGYHMWRMIGAGAHLAVGIDPTQLFLCQFEAVRKLLGNDQRAHLLPLGIEQLPALKAFDTVFSMGVLYHRRSPLEHLWQLKDQLVNEGELVLETLVIDGDENTVLVPGDRYAQMRNVYFIPSALALKNWLKKCGFVDIRIADVSVTTTEEQRRTEWMVTESLSDFLDPHDPSKTVEGYPAPKRAVLIARKP</sequence>
<organism>
    <name type="scientific">Escherichia coli O157:H7 (strain EC4115 / EHEC)</name>
    <dbReference type="NCBI Taxonomy" id="444450"/>
    <lineage>
        <taxon>Bacteria</taxon>
        <taxon>Pseudomonadati</taxon>
        <taxon>Pseudomonadota</taxon>
        <taxon>Gammaproteobacteria</taxon>
        <taxon>Enterobacterales</taxon>
        <taxon>Enterobacteriaceae</taxon>
        <taxon>Escherichia</taxon>
    </lineage>
</organism>
<name>CMOB_ECO5E</name>
<comment type="function">
    <text evidence="1">Catalyzes carboxymethyl transfer from carboxy-S-adenosyl-L-methionine (Cx-SAM) to 5-hydroxyuridine (ho5U) to form 5-carboxymethoxyuridine (cmo5U) at position 34 in tRNAs.</text>
</comment>
<comment type="catalytic activity">
    <reaction evidence="1">
        <text>carboxy-S-adenosyl-L-methionine + 5-hydroxyuridine(34) in tRNA = 5-carboxymethoxyuridine(34) in tRNA + S-adenosyl-L-homocysteine + H(+)</text>
        <dbReference type="Rhea" id="RHEA:52848"/>
        <dbReference type="Rhea" id="RHEA-COMP:13381"/>
        <dbReference type="Rhea" id="RHEA-COMP:13383"/>
        <dbReference type="ChEBI" id="CHEBI:15378"/>
        <dbReference type="ChEBI" id="CHEBI:57856"/>
        <dbReference type="ChEBI" id="CHEBI:134278"/>
        <dbReference type="ChEBI" id="CHEBI:136877"/>
        <dbReference type="ChEBI" id="CHEBI:136879"/>
    </reaction>
</comment>
<comment type="subunit">
    <text evidence="1">Homotetramer.</text>
</comment>
<comment type="similarity">
    <text evidence="1">Belongs to the class I-like SAM-binding methyltransferase superfamily. CmoB family.</text>
</comment>